<protein>
    <recommendedName>
        <fullName evidence="1">ATP-dependent Clp protease ATP-binding subunit ClpX</fullName>
    </recommendedName>
</protein>
<organism>
    <name type="scientific">Streptococcus pyogenes serotype M18 (strain MGAS8232)</name>
    <dbReference type="NCBI Taxonomy" id="186103"/>
    <lineage>
        <taxon>Bacteria</taxon>
        <taxon>Bacillati</taxon>
        <taxon>Bacillota</taxon>
        <taxon>Bacilli</taxon>
        <taxon>Lactobacillales</taxon>
        <taxon>Streptococcaceae</taxon>
        <taxon>Streptococcus</taxon>
    </lineage>
</organism>
<gene>
    <name evidence="1" type="primary">clpX</name>
    <name type="ordered locus">spyM18_0946</name>
</gene>
<accession>P63795</accession>
<accession>Q9A089</accession>
<feature type="chain" id="PRO_0000160437" description="ATP-dependent Clp protease ATP-binding subunit ClpX">
    <location>
        <begin position="1"/>
        <end position="409"/>
    </location>
</feature>
<feature type="domain" description="ClpX-type ZB" evidence="2">
    <location>
        <begin position="1"/>
        <end position="54"/>
    </location>
</feature>
<feature type="binding site" evidence="2">
    <location>
        <position position="13"/>
    </location>
    <ligand>
        <name>Zn(2+)</name>
        <dbReference type="ChEBI" id="CHEBI:29105"/>
    </ligand>
</feature>
<feature type="binding site" evidence="2">
    <location>
        <position position="16"/>
    </location>
    <ligand>
        <name>Zn(2+)</name>
        <dbReference type="ChEBI" id="CHEBI:29105"/>
    </ligand>
</feature>
<feature type="binding site" evidence="2">
    <location>
        <position position="35"/>
    </location>
    <ligand>
        <name>Zn(2+)</name>
        <dbReference type="ChEBI" id="CHEBI:29105"/>
    </ligand>
</feature>
<feature type="binding site" evidence="2">
    <location>
        <position position="38"/>
    </location>
    <ligand>
        <name>Zn(2+)</name>
        <dbReference type="ChEBI" id="CHEBI:29105"/>
    </ligand>
</feature>
<feature type="binding site" evidence="1">
    <location>
        <begin position="119"/>
        <end position="126"/>
    </location>
    <ligand>
        <name>ATP</name>
        <dbReference type="ChEBI" id="CHEBI:30616"/>
    </ligand>
</feature>
<name>CLPX_STRP8</name>
<reference key="1">
    <citation type="journal article" date="2002" name="Proc. Natl. Acad. Sci. U.S.A.">
        <title>Genome sequence and comparative microarray analysis of serotype M18 group A Streptococcus strains associated with acute rheumatic fever outbreaks.</title>
        <authorList>
            <person name="Smoot J.C."/>
            <person name="Barbian K.D."/>
            <person name="Van Gompel J.J."/>
            <person name="Smoot L.M."/>
            <person name="Chaussee M.S."/>
            <person name="Sylva G.L."/>
            <person name="Sturdevant D.E."/>
            <person name="Ricklefs S.M."/>
            <person name="Porcella S.F."/>
            <person name="Parkins L.D."/>
            <person name="Beres S.B."/>
            <person name="Campbell D.S."/>
            <person name="Smith T.M."/>
            <person name="Zhang Q."/>
            <person name="Kapur V."/>
            <person name="Daly J.A."/>
            <person name="Veasy L.G."/>
            <person name="Musser J.M."/>
        </authorList>
    </citation>
    <scope>NUCLEOTIDE SEQUENCE [LARGE SCALE GENOMIC DNA]</scope>
    <source>
        <strain>MGAS8232</strain>
    </source>
</reference>
<comment type="function">
    <text evidence="1">ATP-dependent specificity component of the Clp protease. It directs the protease to specific substrates. Can perform chaperone functions in the absence of ClpP.</text>
</comment>
<comment type="subunit">
    <text evidence="1">Component of the ClpX-ClpP complex. Forms a hexameric ring that, in the presence of ATP, binds to fourteen ClpP subunits assembled into a disk-like structure with a central cavity, resembling the structure of eukaryotic proteasomes.</text>
</comment>
<comment type="similarity">
    <text evidence="1">Belongs to the ClpX chaperone family.</text>
</comment>
<proteinExistence type="inferred from homology"/>
<keyword id="KW-0067">ATP-binding</keyword>
<keyword id="KW-0143">Chaperone</keyword>
<keyword id="KW-0479">Metal-binding</keyword>
<keyword id="KW-0547">Nucleotide-binding</keyword>
<keyword id="KW-0862">Zinc</keyword>
<evidence type="ECO:0000255" key="1">
    <source>
        <dbReference type="HAMAP-Rule" id="MF_00175"/>
    </source>
</evidence>
<evidence type="ECO:0000255" key="2">
    <source>
        <dbReference type="PROSITE-ProRule" id="PRU01250"/>
    </source>
</evidence>
<dbReference type="EMBL" id="AE009949">
    <property type="protein sequence ID" value="AAL97588.1"/>
    <property type="molecule type" value="Genomic_DNA"/>
</dbReference>
<dbReference type="RefSeq" id="WP_002984948.1">
    <property type="nucleotide sequence ID" value="NC_003485.1"/>
</dbReference>
<dbReference type="SMR" id="P63795"/>
<dbReference type="GeneID" id="69901010"/>
<dbReference type="KEGG" id="spm:spyM18_0946"/>
<dbReference type="HOGENOM" id="CLU_014218_8_2_9"/>
<dbReference type="GO" id="GO:0009376">
    <property type="term" value="C:HslUV protease complex"/>
    <property type="evidence" value="ECO:0007669"/>
    <property type="project" value="TreeGrafter"/>
</dbReference>
<dbReference type="GO" id="GO:0005524">
    <property type="term" value="F:ATP binding"/>
    <property type="evidence" value="ECO:0007669"/>
    <property type="project" value="UniProtKB-UniRule"/>
</dbReference>
<dbReference type="GO" id="GO:0016887">
    <property type="term" value="F:ATP hydrolysis activity"/>
    <property type="evidence" value="ECO:0007669"/>
    <property type="project" value="InterPro"/>
</dbReference>
<dbReference type="GO" id="GO:0140662">
    <property type="term" value="F:ATP-dependent protein folding chaperone"/>
    <property type="evidence" value="ECO:0007669"/>
    <property type="project" value="InterPro"/>
</dbReference>
<dbReference type="GO" id="GO:0046983">
    <property type="term" value="F:protein dimerization activity"/>
    <property type="evidence" value="ECO:0007669"/>
    <property type="project" value="InterPro"/>
</dbReference>
<dbReference type="GO" id="GO:0051082">
    <property type="term" value="F:unfolded protein binding"/>
    <property type="evidence" value="ECO:0007669"/>
    <property type="project" value="UniProtKB-UniRule"/>
</dbReference>
<dbReference type="GO" id="GO:0008270">
    <property type="term" value="F:zinc ion binding"/>
    <property type="evidence" value="ECO:0007669"/>
    <property type="project" value="InterPro"/>
</dbReference>
<dbReference type="GO" id="GO:0051301">
    <property type="term" value="P:cell division"/>
    <property type="evidence" value="ECO:0007669"/>
    <property type="project" value="TreeGrafter"/>
</dbReference>
<dbReference type="GO" id="GO:0051603">
    <property type="term" value="P:proteolysis involved in protein catabolic process"/>
    <property type="evidence" value="ECO:0007669"/>
    <property type="project" value="TreeGrafter"/>
</dbReference>
<dbReference type="CDD" id="cd19497">
    <property type="entry name" value="RecA-like_ClpX"/>
    <property type="match status" value="1"/>
</dbReference>
<dbReference type="FunFam" id="1.10.8.60:FF:000002">
    <property type="entry name" value="ATP-dependent Clp protease ATP-binding subunit ClpX"/>
    <property type="match status" value="1"/>
</dbReference>
<dbReference type="FunFam" id="3.40.50.300:FF:000005">
    <property type="entry name" value="ATP-dependent Clp protease ATP-binding subunit ClpX"/>
    <property type="match status" value="1"/>
</dbReference>
<dbReference type="Gene3D" id="1.10.8.60">
    <property type="match status" value="1"/>
</dbReference>
<dbReference type="Gene3D" id="6.20.220.10">
    <property type="entry name" value="ClpX chaperone, C4-type zinc finger domain"/>
    <property type="match status" value="1"/>
</dbReference>
<dbReference type="Gene3D" id="3.40.50.300">
    <property type="entry name" value="P-loop containing nucleotide triphosphate hydrolases"/>
    <property type="match status" value="1"/>
</dbReference>
<dbReference type="HAMAP" id="MF_00175">
    <property type="entry name" value="ClpX"/>
    <property type="match status" value="1"/>
</dbReference>
<dbReference type="InterPro" id="IPR003593">
    <property type="entry name" value="AAA+_ATPase"/>
</dbReference>
<dbReference type="InterPro" id="IPR050052">
    <property type="entry name" value="ATP-dep_Clp_protease_ClpX"/>
</dbReference>
<dbReference type="InterPro" id="IPR003959">
    <property type="entry name" value="ATPase_AAA_core"/>
</dbReference>
<dbReference type="InterPro" id="IPR019489">
    <property type="entry name" value="Clp_ATPase_C"/>
</dbReference>
<dbReference type="InterPro" id="IPR004487">
    <property type="entry name" value="Clp_protease_ATP-bd_su_ClpX"/>
</dbReference>
<dbReference type="InterPro" id="IPR046425">
    <property type="entry name" value="ClpX_bact"/>
</dbReference>
<dbReference type="InterPro" id="IPR027417">
    <property type="entry name" value="P-loop_NTPase"/>
</dbReference>
<dbReference type="InterPro" id="IPR010603">
    <property type="entry name" value="Znf_CppX_C4"/>
</dbReference>
<dbReference type="InterPro" id="IPR038366">
    <property type="entry name" value="Znf_CppX_C4_sf"/>
</dbReference>
<dbReference type="NCBIfam" id="TIGR00382">
    <property type="entry name" value="clpX"/>
    <property type="match status" value="1"/>
</dbReference>
<dbReference type="NCBIfam" id="NF003745">
    <property type="entry name" value="PRK05342.1"/>
    <property type="match status" value="1"/>
</dbReference>
<dbReference type="PANTHER" id="PTHR48102:SF7">
    <property type="entry name" value="ATP-DEPENDENT CLP PROTEASE ATP-BINDING SUBUNIT CLPX-LIKE, MITOCHONDRIAL"/>
    <property type="match status" value="1"/>
</dbReference>
<dbReference type="PANTHER" id="PTHR48102">
    <property type="entry name" value="ATP-DEPENDENT CLP PROTEASE ATP-BINDING SUBUNIT CLPX-LIKE, MITOCHONDRIAL-RELATED"/>
    <property type="match status" value="1"/>
</dbReference>
<dbReference type="Pfam" id="PF07724">
    <property type="entry name" value="AAA_2"/>
    <property type="match status" value="1"/>
</dbReference>
<dbReference type="Pfam" id="PF10431">
    <property type="entry name" value="ClpB_D2-small"/>
    <property type="match status" value="1"/>
</dbReference>
<dbReference type="Pfam" id="PF06689">
    <property type="entry name" value="zf-C4_ClpX"/>
    <property type="match status" value="1"/>
</dbReference>
<dbReference type="SMART" id="SM00382">
    <property type="entry name" value="AAA"/>
    <property type="match status" value="1"/>
</dbReference>
<dbReference type="SMART" id="SM01086">
    <property type="entry name" value="ClpB_D2-small"/>
    <property type="match status" value="1"/>
</dbReference>
<dbReference type="SMART" id="SM00994">
    <property type="entry name" value="zf-C4_ClpX"/>
    <property type="match status" value="1"/>
</dbReference>
<dbReference type="SUPFAM" id="SSF57716">
    <property type="entry name" value="Glucocorticoid receptor-like (DNA-binding domain)"/>
    <property type="match status" value="1"/>
</dbReference>
<dbReference type="SUPFAM" id="SSF52540">
    <property type="entry name" value="P-loop containing nucleoside triphosphate hydrolases"/>
    <property type="match status" value="1"/>
</dbReference>
<dbReference type="PROSITE" id="PS51902">
    <property type="entry name" value="CLPX_ZB"/>
    <property type="match status" value="1"/>
</dbReference>
<sequence length="409" mass="44991">MAGSRTNDIKVYCSFCGKSQDDVKKIIAGNNVFICNECVALSQEIIKEELAEEVLADLTEVPKPKELLDVLNQYVVGQDRAKRALSVAVYNHYKRVSFTESRDDDDVDLQKSNILMIGPTGSGKTFLAQTLAKSLNVPFAIADATSLTEAGYVGEDVENILLKLIQAADYNVERAERGIIYVDEIDKIAKKGENVSITRDVSGEGVQQALLKIIEGTVASVPPQGGRKHPNQEMIQIDTKNILFIVGGAFDGIEEIVKQRLGEKVIGFGQNSRKIDDNASYMQEIISEDIQKFGLIPEFIGRLPVVAALEQLNTSDLIQILTEPRNALVKQYQALLSYDGVELAFDKEALEAIANKAIERKTGARGLRSIIEETMLDIMFEIPSQEDVTKVRITKAAVEGKSKPVLETA</sequence>